<proteinExistence type="evidence at protein level"/>
<name>PHOAT_MYCS2</name>
<gene>
    <name evidence="2" type="primary">phoAT</name>
    <name type="ordered locus">MSMEG_5247.5</name>
    <name type="ordered locus">MSMEI_5108.5</name>
</gene>
<comment type="function">
    <text evidence="1">Probable antitoxin component of a type II toxin-antitoxin (TA) system. The probable cognate antitoxin is PhoAT; the toxin gene can be expressed in the absence of the antitoxin gene in M.smegmatis strain mc(2)155 (PubMed:25999286).</text>
</comment>
<comment type="subunit">
    <text evidence="1">Interacts with toxin PhoH2 (PubMed:25999286).</text>
</comment>
<comment type="induction">
    <text evidence="1">Part of the phoAT-phoH2 operon (PubMed:25999286).</text>
</comment>
<comment type="disruption phenotype">
    <text evidence="1">Deletion of the phoAT-phoH2 genes has no visible growth phenotype (PubMed:25999286).</text>
</comment>
<comment type="similarity">
    <text evidence="3">Belongs to the PhoAT antitoxin family.</text>
</comment>
<organism>
    <name type="scientific">Mycolicibacterium smegmatis (strain ATCC 700084 / mc(2)155)</name>
    <name type="common">Mycobacterium smegmatis</name>
    <dbReference type="NCBI Taxonomy" id="246196"/>
    <lineage>
        <taxon>Bacteria</taxon>
        <taxon>Bacillati</taxon>
        <taxon>Actinomycetota</taxon>
        <taxon>Actinomycetes</taxon>
        <taxon>Mycobacteriales</taxon>
        <taxon>Mycobacteriaceae</taxon>
        <taxon>Mycolicibacterium</taxon>
    </lineage>
</organism>
<reference key="1">
    <citation type="submission" date="2006-10" db="EMBL/GenBank/DDBJ databases">
        <authorList>
            <person name="Fleischmann R.D."/>
            <person name="Dodson R.J."/>
            <person name="Haft D.H."/>
            <person name="Merkel J.S."/>
            <person name="Nelson W.C."/>
            <person name="Fraser C.M."/>
        </authorList>
    </citation>
    <scope>NUCLEOTIDE SEQUENCE [LARGE SCALE GENOMIC DNA]</scope>
    <source>
        <strain>ATCC 700084 / mc(2)155</strain>
    </source>
</reference>
<reference key="2">
    <citation type="journal article" date="2007" name="Genome Biol.">
        <title>Interrupted coding sequences in Mycobacterium smegmatis: authentic mutations or sequencing errors?</title>
        <authorList>
            <person name="Deshayes C."/>
            <person name="Perrodou E."/>
            <person name="Gallien S."/>
            <person name="Euphrasie D."/>
            <person name="Schaeffer C."/>
            <person name="Van-Dorsselaer A."/>
            <person name="Poch O."/>
            <person name="Lecompte O."/>
            <person name="Reyrat J.-M."/>
        </authorList>
    </citation>
    <scope>NUCLEOTIDE SEQUENCE [LARGE SCALE GENOMIC DNA]</scope>
    <source>
        <strain>ATCC 700084 / mc(2)155</strain>
    </source>
</reference>
<reference key="3">
    <citation type="journal article" date="2009" name="Genome Res.">
        <title>Ortho-proteogenomics: multiple proteomes investigation through orthology and a new MS-based protocol.</title>
        <authorList>
            <person name="Gallien S."/>
            <person name="Perrodou E."/>
            <person name="Carapito C."/>
            <person name="Deshayes C."/>
            <person name="Reyrat J.-M."/>
            <person name="Van Dorsselaer A."/>
            <person name="Poch O."/>
            <person name="Schaeffer C."/>
            <person name="Lecompte O."/>
        </authorList>
    </citation>
    <scope>NUCLEOTIDE SEQUENCE [LARGE SCALE GENOMIC DNA]</scope>
    <source>
        <strain>ATCC 700084 / mc(2)155</strain>
    </source>
</reference>
<reference key="4">
    <citation type="journal article" date="2015" name="Tuberculosis">
        <title>The mycobacterial PhoH2 proteins are type II toxin antitoxins coupled to RNA helicase domains.</title>
        <authorList>
            <person name="Andrews E.S."/>
            <person name="Arcus V.L."/>
        </authorList>
    </citation>
    <scope>IDENTIFICATION BY MASS SPECTROMETRY</scope>
    <scope>FUNCTION</scope>
    <scope>SUBUNIT</scope>
    <scope>OPERON STRUCTURE</scope>
    <scope>DISRUPTION PHENOTYPE</scope>
    <source>
        <strain>ATCC 700084 / mc(2)155</strain>
    </source>
</reference>
<dbReference type="EMBL" id="CP000480">
    <property type="status" value="NOT_ANNOTATED_CDS"/>
    <property type="molecule type" value="Genomic_DNA"/>
</dbReference>
<dbReference type="EMBL" id="CP001663">
    <property type="status" value="NOT_ANNOTATED_CDS"/>
    <property type="molecule type" value="Genomic_DNA"/>
</dbReference>
<dbReference type="Proteomes" id="UP000000757">
    <property type="component" value="Chromosome"/>
</dbReference>
<dbReference type="Proteomes" id="UP000006158">
    <property type="component" value="Chromosome"/>
</dbReference>
<accession>P0DXF0</accession>
<keyword id="KW-1185">Reference proteome</keyword>
<keyword id="KW-1277">Toxin-antitoxin system</keyword>
<sequence>MASDLLCCPGGTDRFDHERTGPGPAAVSTEQFVWGRMKSAVPLGAPRD</sequence>
<evidence type="ECO:0000269" key="1">
    <source>
    </source>
</evidence>
<evidence type="ECO:0000303" key="2">
    <source>
    </source>
</evidence>
<evidence type="ECO:0000305" key="3"/>
<protein>
    <recommendedName>
        <fullName evidence="2">Probable antitoxin PhoAT</fullName>
    </recommendedName>
</protein>
<feature type="chain" id="PRO_0000460850" description="Probable antitoxin PhoAT">
    <location>
        <begin position="1"/>
        <end position="48"/>
    </location>
</feature>